<reference key="1">
    <citation type="journal article" date="2001" name="Proc. Natl. Acad. Sci. U.S.A.">
        <title>Analysis of the chromosome sequence of the legume symbiont Sinorhizobium meliloti strain 1021.</title>
        <authorList>
            <person name="Capela D."/>
            <person name="Barloy-Hubler F."/>
            <person name="Gouzy J."/>
            <person name="Bothe G."/>
            <person name="Ampe F."/>
            <person name="Batut J."/>
            <person name="Boistard P."/>
            <person name="Becker A."/>
            <person name="Boutry M."/>
            <person name="Cadieu E."/>
            <person name="Dreano S."/>
            <person name="Gloux S."/>
            <person name="Godrie T."/>
            <person name="Goffeau A."/>
            <person name="Kahn D."/>
            <person name="Kiss E."/>
            <person name="Lelaure V."/>
            <person name="Masuy D."/>
            <person name="Pohl T."/>
            <person name="Portetelle D."/>
            <person name="Puehler A."/>
            <person name="Purnelle B."/>
            <person name="Ramsperger U."/>
            <person name="Renard C."/>
            <person name="Thebault P."/>
            <person name="Vandenbol M."/>
            <person name="Weidner S."/>
            <person name="Galibert F."/>
        </authorList>
    </citation>
    <scope>NUCLEOTIDE SEQUENCE [LARGE SCALE GENOMIC DNA]</scope>
    <source>
        <strain>1021</strain>
    </source>
</reference>
<reference key="2">
    <citation type="journal article" date="2001" name="Science">
        <title>The composite genome of the legume symbiont Sinorhizobium meliloti.</title>
        <authorList>
            <person name="Galibert F."/>
            <person name="Finan T.M."/>
            <person name="Long S.R."/>
            <person name="Puehler A."/>
            <person name="Abola P."/>
            <person name="Ampe F."/>
            <person name="Barloy-Hubler F."/>
            <person name="Barnett M.J."/>
            <person name="Becker A."/>
            <person name="Boistard P."/>
            <person name="Bothe G."/>
            <person name="Boutry M."/>
            <person name="Bowser L."/>
            <person name="Buhrmester J."/>
            <person name="Cadieu E."/>
            <person name="Capela D."/>
            <person name="Chain P."/>
            <person name="Cowie A."/>
            <person name="Davis R.W."/>
            <person name="Dreano S."/>
            <person name="Federspiel N.A."/>
            <person name="Fisher R.F."/>
            <person name="Gloux S."/>
            <person name="Godrie T."/>
            <person name="Goffeau A."/>
            <person name="Golding B."/>
            <person name="Gouzy J."/>
            <person name="Gurjal M."/>
            <person name="Hernandez-Lucas I."/>
            <person name="Hong A."/>
            <person name="Huizar L."/>
            <person name="Hyman R.W."/>
            <person name="Jones T."/>
            <person name="Kahn D."/>
            <person name="Kahn M.L."/>
            <person name="Kalman S."/>
            <person name="Keating D.H."/>
            <person name="Kiss E."/>
            <person name="Komp C."/>
            <person name="Lelaure V."/>
            <person name="Masuy D."/>
            <person name="Palm C."/>
            <person name="Peck M.C."/>
            <person name="Pohl T.M."/>
            <person name="Portetelle D."/>
            <person name="Purnelle B."/>
            <person name="Ramsperger U."/>
            <person name="Surzycki R."/>
            <person name="Thebault P."/>
            <person name="Vandenbol M."/>
            <person name="Vorhoelter F.J."/>
            <person name="Weidner S."/>
            <person name="Wells D.H."/>
            <person name="Wong K."/>
            <person name="Yeh K.-C."/>
            <person name="Batut J."/>
        </authorList>
    </citation>
    <scope>NUCLEOTIDE SEQUENCE [LARGE SCALE GENOMIC DNA]</scope>
    <source>
        <strain>1021</strain>
    </source>
</reference>
<protein>
    <recommendedName>
        <fullName>Putative glucose-6-phosphate isomerase 1</fullName>
        <shortName>GPI 1</shortName>
        <ecNumber>5.3.1.9</ecNumber>
    </recommendedName>
    <alternativeName>
        <fullName>Phosphoglucose isomerase 1</fullName>
        <shortName>PGI 1</shortName>
    </alternativeName>
    <alternativeName>
        <fullName>Phosphohexose isomerase 1</fullName>
        <shortName>PHI 1</shortName>
    </alternativeName>
</protein>
<gene>
    <name type="primary">pgiA1</name>
    <name type="ordered locus">R02554</name>
    <name type="ORF">SMc02042</name>
</gene>
<dbReference type="EC" id="5.3.1.9"/>
<dbReference type="EMBL" id="AL591688">
    <property type="protein sequence ID" value="CAC47133.1"/>
    <property type="molecule type" value="Genomic_DNA"/>
</dbReference>
<dbReference type="RefSeq" id="NP_386660.1">
    <property type="nucleotide sequence ID" value="NC_003047.1"/>
</dbReference>
<dbReference type="RefSeq" id="WP_010970025.1">
    <property type="nucleotide sequence ID" value="NC_003047.1"/>
</dbReference>
<dbReference type="SMR" id="Q92MQ8"/>
<dbReference type="EnsemblBacteria" id="CAC47133">
    <property type="protein sequence ID" value="CAC47133"/>
    <property type="gene ID" value="SMc02042"/>
</dbReference>
<dbReference type="KEGG" id="sme:SMc02042"/>
<dbReference type="PATRIC" id="fig|266834.11.peg.4050"/>
<dbReference type="eggNOG" id="COG2140">
    <property type="taxonomic scope" value="Bacteria"/>
</dbReference>
<dbReference type="HOGENOM" id="CLU_105797_0_0_5"/>
<dbReference type="OrthoDB" id="5592106at2"/>
<dbReference type="SABIO-RK" id="Q92MQ8"/>
<dbReference type="UniPathway" id="UPA00109">
    <property type="reaction ID" value="UER00181"/>
</dbReference>
<dbReference type="Proteomes" id="UP000001976">
    <property type="component" value="Chromosome"/>
</dbReference>
<dbReference type="GO" id="GO:0005737">
    <property type="term" value="C:cytoplasm"/>
    <property type="evidence" value="ECO:0007669"/>
    <property type="project" value="UniProtKB-SubCell"/>
</dbReference>
<dbReference type="GO" id="GO:0004347">
    <property type="term" value="F:glucose-6-phosphate isomerase activity"/>
    <property type="evidence" value="ECO:0007669"/>
    <property type="project" value="UniProtKB-UniRule"/>
</dbReference>
<dbReference type="GO" id="GO:0005506">
    <property type="term" value="F:iron ion binding"/>
    <property type="evidence" value="ECO:0007669"/>
    <property type="project" value="InterPro"/>
</dbReference>
<dbReference type="GO" id="GO:0006094">
    <property type="term" value="P:gluconeogenesis"/>
    <property type="evidence" value="ECO:0007669"/>
    <property type="project" value="UniProtKB-UniRule"/>
</dbReference>
<dbReference type="GO" id="GO:0006096">
    <property type="term" value="P:glycolytic process"/>
    <property type="evidence" value="ECO:0007669"/>
    <property type="project" value="UniProtKB-UniRule"/>
</dbReference>
<dbReference type="CDD" id="cd02218">
    <property type="entry name" value="cupin_PGI"/>
    <property type="match status" value="1"/>
</dbReference>
<dbReference type="Gene3D" id="2.60.120.10">
    <property type="entry name" value="Jelly Rolls"/>
    <property type="match status" value="1"/>
</dbReference>
<dbReference type="HAMAP" id="MF_01410">
    <property type="entry name" value="G6P_isomerase_arch"/>
    <property type="match status" value="1"/>
</dbReference>
<dbReference type="InterPro" id="IPR016758">
    <property type="entry name" value="G6P_isomerase_archaea/bacteria"/>
</dbReference>
<dbReference type="InterPro" id="IPR010551">
    <property type="entry name" value="G6P_isomerase_prok"/>
</dbReference>
<dbReference type="InterPro" id="IPR014710">
    <property type="entry name" value="RmlC-like_jellyroll"/>
</dbReference>
<dbReference type="InterPro" id="IPR011051">
    <property type="entry name" value="RmlC_Cupin_sf"/>
</dbReference>
<dbReference type="Pfam" id="PF06560">
    <property type="entry name" value="GPI"/>
    <property type="match status" value="1"/>
</dbReference>
<dbReference type="PIRSF" id="PIRSF019325">
    <property type="entry name" value="Glucose-6-phosphate_isomerase"/>
    <property type="match status" value="1"/>
</dbReference>
<dbReference type="SUPFAM" id="SSF51182">
    <property type="entry name" value="RmlC-like cupins"/>
    <property type="match status" value="1"/>
</dbReference>
<sequence length="214" mass="24049">MTKLFEPAGCRVDLRTGAMSDATGAYQKRFRDLAGLYADEAAFSAMQETWNDTVVYEVSEFRPNERTGDLIFGVTRMLPGKVGEEYFVTRGHIHKQSDRPEIYYGQKGRGLMLLESPEGEVRVVAVDAQTVCYVPPYWIHRSVNIGGDELVMLFCYPADSGQDYDCIAKAGGMRARIIDDGRGGWKQIDNPNWRMRDAATVAALYGREKKEENA</sequence>
<feature type="chain" id="PRO_0000185361" description="Putative glucose-6-phosphate isomerase 1">
    <location>
        <begin position="1"/>
        <end position="214"/>
    </location>
</feature>
<feature type="binding site" evidence="1">
    <location>
        <position position="92"/>
    </location>
    <ligand>
        <name>Fe cation</name>
        <dbReference type="ChEBI" id="CHEBI:24875"/>
    </ligand>
</feature>
<feature type="binding site" evidence="1">
    <location>
        <position position="94"/>
    </location>
    <ligand>
        <name>Fe cation</name>
        <dbReference type="ChEBI" id="CHEBI:24875"/>
    </ligand>
</feature>
<feature type="binding site" evidence="1">
    <location>
        <position position="101"/>
    </location>
    <ligand>
        <name>Fe cation</name>
        <dbReference type="ChEBI" id="CHEBI:24875"/>
    </ligand>
</feature>
<feature type="binding site" evidence="1">
    <location>
        <position position="140"/>
    </location>
    <ligand>
        <name>Fe cation</name>
        <dbReference type="ChEBI" id="CHEBI:24875"/>
    </ligand>
</feature>
<accession>Q92MQ8</accession>
<name>G6PI1_RHIME</name>
<comment type="catalytic activity">
    <reaction>
        <text>alpha-D-glucose 6-phosphate = beta-D-fructose 6-phosphate</text>
        <dbReference type="Rhea" id="RHEA:11816"/>
        <dbReference type="ChEBI" id="CHEBI:57634"/>
        <dbReference type="ChEBI" id="CHEBI:58225"/>
        <dbReference type="EC" id="5.3.1.9"/>
    </reaction>
</comment>
<comment type="cofactor">
    <cofactor evidence="1">
        <name>Fe cation</name>
        <dbReference type="ChEBI" id="CHEBI:24875"/>
    </cofactor>
    <text evidence="1">Binds 1 Fe cation per subunit.</text>
</comment>
<comment type="pathway">
    <text>Carbohydrate degradation; glycolysis; D-glyceraldehyde 3-phosphate and glycerone phosphate from D-glucose: step 2/4.</text>
</comment>
<comment type="subunit">
    <text evidence="1">Homodimer.</text>
</comment>
<comment type="subcellular location">
    <subcellularLocation>
        <location evidence="1">Cytoplasm</location>
    </subcellularLocation>
</comment>
<comment type="miscellaneous">
    <text>R.meliloti has a classic glucose-6-phosphate isomerase (AC Q92SC4) and two archaeal-type glucose-6-phosphate isomerases.</text>
</comment>
<comment type="similarity">
    <text evidence="2">Belongs to the archaeal-type GPI family.</text>
</comment>
<proteinExistence type="inferred from homology"/>
<evidence type="ECO:0000250" key="1"/>
<evidence type="ECO:0000305" key="2"/>
<organism>
    <name type="scientific">Rhizobium meliloti (strain 1021)</name>
    <name type="common">Ensifer meliloti</name>
    <name type="synonym">Sinorhizobium meliloti</name>
    <dbReference type="NCBI Taxonomy" id="266834"/>
    <lineage>
        <taxon>Bacteria</taxon>
        <taxon>Pseudomonadati</taxon>
        <taxon>Pseudomonadota</taxon>
        <taxon>Alphaproteobacteria</taxon>
        <taxon>Hyphomicrobiales</taxon>
        <taxon>Rhizobiaceae</taxon>
        <taxon>Sinorhizobium/Ensifer group</taxon>
        <taxon>Sinorhizobium</taxon>
    </lineage>
</organism>
<keyword id="KW-0963">Cytoplasm</keyword>
<keyword id="KW-0312">Gluconeogenesis</keyword>
<keyword id="KW-0324">Glycolysis</keyword>
<keyword id="KW-0408">Iron</keyword>
<keyword id="KW-0413">Isomerase</keyword>
<keyword id="KW-0479">Metal-binding</keyword>
<keyword id="KW-1185">Reference proteome</keyword>